<accession>Q3ZBN0</accession>
<comment type="similarity">
    <text evidence="2">Belongs to the costars family.</text>
</comment>
<sequence>MNVDHEVKLLVEEIHRLGSKNADGKLSVKFGVLFQDDKCANLFEALVGTLKAAKRRKIITYSGELLLQGVHDDVDIILLQD</sequence>
<reference key="1">
    <citation type="submission" date="2005-08" db="EMBL/GenBank/DDBJ databases">
        <authorList>
            <consortium name="NIH - Mammalian Gene Collection (MGC) project"/>
        </authorList>
    </citation>
    <scope>NUCLEOTIDE SEQUENCE [LARGE SCALE MRNA]</scope>
    <source>
        <strain>Hereford</strain>
        <tissue>Thymus</tissue>
    </source>
</reference>
<feature type="chain" id="PRO_0000365535" description="Costars family protein ABRACL">
    <location>
        <begin position="1"/>
        <end position="81"/>
    </location>
</feature>
<feature type="modified residue" description="N-acetylmethionine" evidence="1">
    <location>
        <position position="1"/>
    </location>
</feature>
<organism>
    <name type="scientific">Bos taurus</name>
    <name type="common">Bovine</name>
    <dbReference type="NCBI Taxonomy" id="9913"/>
    <lineage>
        <taxon>Eukaryota</taxon>
        <taxon>Metazoa</taxon>
        <taxon>Chordata</taxon>
        <taxon>Craniata</taxon>
        <taxon>Vertebrata</taxon>
        <taxon>Euteleostomi</taxon>
        <taxon>Mammalia</taxon>
        <taxon>Eutheria</taxon>
        <taxon>Laurasiatheria</taxon>
        <taxon>Artiodactyla</taxon>
        <taxon>Ruminantia</taxon>
        <taxon>Pecora</taxon>
        <taxon>Bovidae</taxon>
        <taxon>Bovinae</taxon>
        <taxon>Bos</taxon>
    </lineage>
</organism>
<name>ABRAL_BOVIN</name>
<evidence type="ECO:0000250" key="1">
    <source>
        <dbReference type="UniProtKB" id="Q9P1F3"/>
    </source>
</evidence>
<evidence type="ECO:0000305" key="2"/>
<keyword id="KW-0007">Acetylation</keyword>
<keyword id="KW-1185">Reference proteome</keyword>
<gene>
    <name type="primary">ABRACL</name>
</gene>
<protein>
    <recommendedName>
        <fullName>Costars family protein ABRACL</fullName>
    </recommendedName>
    <alternativeName>
        <fullName>ABRA C-terminal-like protein</fullName>
    </alternativeName>
</protein>
<dbReference type="EMBL" id="BC103206">
    <property type="protein sequence ID" value="AAI03207.1"/>
    <property type="molecule type" value="mRNA"/>
</dbReference>
<dbReference type="RefSeq" id="NP_001160033.1">
    <property type="nucleotide sequence ID" value="NM_001166561.1"/>
</dbReference>
<dbReference type="RefSeq" id="XP_005211043.1">
    <property type="nucleotide sequence ID" value="XM_005210986.3"/>
</dbReference>
<dbReference type="RefSeq" id="XP_024852213.1">
    <property type="nucleotide sequence ID" value="XM_024996445.2"/>
</dbReference>
<dbReference type="SMR" id="Q3ZBN0"/>
<dbReference type="FunCoup" id="Q3ZBN0">
    <property type="interactions" value="545"/>
</dbReference>
<dbReference type="STRING" id="9913.ENSBTAP00000001895"/>
<dbReference type="PaxDb" id="9913-ENSBTAP00000001895"/>
<dbReference type="GeneID" id="505914"/>
<dbReference type="KEGG" id="bta:505914"/>
<dbReference type="CTD" id="58527"/>
<dbReference type="VEuPathDB" id="HostDB:ENSBTAG00000001446"/>
<dbReference type="eggNOG" id="KOG3376">
    <property type="taxonomic scope" value="Eukaryota"/>
</dbReference>
<dbReference type="HOGENOM" id="CLU_173478_0_0_1"/>
<dbReference type="InParanoid" id="Q3ZBN0"/>
<dbReference type="OMA" id="QRVHDNV"/>
<dbReference type="OrthoDB" id="9871914at2759"/>
<dbReference type="Proteomes" id="UP000009136">
    <property type="component" value="Chromosome 9"/>
</dbReference>
<dbReference type="Bgee" id="ENSBTAG00000001446">
    <property type="expression patterns" value="Expressed in pharyngeal tonsil and 106 other cell types or tissues"/>
</dbReference>
<dbReference type="GO" id="GO:0032970">
    <property type="term" value="P:regulation of actin filament-based process"/>
    <property type="evidence" value="ECO:0000318"/>
    <property type="project" value="GO_Central"/>
</dbReference>
<dbReference type="FunFam" id="1.10.10.1540:FF:000002">
    <property type="entry name" value="costars family protein ABRACL"/>
    <property type="match status" value="1"/>
</dbReference>
<dbReference type="Gene3D" id="1.10.10.1540">
    <property type="entry name" value="Costar domain"/>
    <property type="match status" value="1"/>
</dbReference>
<dbReference type="InterPro" id="IPR044302">
    <property type="entry name" value="Costars"/>
</dbReference>
<dbReference type="InterPro" id="IPR027817">
    <property type="entry name" value="Costars_dom"/>
</dbReference>
<dbReference type="InterPro" id="IPR038095">
    <property type="entry name" value="Costars_sf"/>
</dbReference>
<dbReference type="PANTHER" id="PTHR46334">
    <property type="entry name" value="COSTARS FAMILY PROTEIN ABRACL"/>
    <property type="match status" value="1"/>
</dbReference>
<dbReference type="PANTHER" id="PTHR46334:SF1">
    <property type="entry name" value="COSTARS FAMILY PROTEIN ABRACL"/>
    <property type="match status" value="1"/>
</dbReference>
<dbReference type="Pfam" id="PF14705">
    <property type="entry name" value="Costars"/>
    <property type="match status" value="1"/>
</dbReference>
<dbReference type="SMART" id="SM01283">
    <property type="entry name" value="Costars"/>
    <property type="match status" value="1"/>
</dbReference>
<proteinExistence type="inferred from homology"/>